<organism>
    <name type="scientific">Lotus japonicus</name>
    <name type="common">Lotus corniculatus var. japonicus</name>
    <dbReference type="NCBI Taxonomy" id="34305"/>
    <lineage>
        <taxon>Eukaryota</taxon>
        <taxon>Viridiplantae</taxon>
        <taxon>Streptophyta</taxon>
        <taxon>Embryophyta</taxon>
        <taxon>Tracheophyta</taxon>
        <taxon>Spermatophyta</taxon>
        <taxon>Magnoliopsida</taxon>
        <taxon>eudicotyledons</taxon>
        <taxon>Gunneridae</taxon>
        <taxon>Pentapetalae</taxon>
        <taxon>rosids</taxon>
        <taxon>fabids</taxon>
        <taxon>Fabales</taxon>
        <taxon>Fabaceae</taxon>
        <taxon>Papilionoideae</taxon>
        <taxon>50 kb inversion clade</taxon>
        <taxon>NPAAA clade</taxon>
        <taxon>Hologalegina</taxon>
        <taxon>robinioid clade</taxon>
        <taxon>Loteae</taxon>
        <taxon>Lotus</taxon>
    </lineage>
</organism>
<comment type="function">
    <text evidence="1 2 4 7 9 10 11">Phytoglobin that reduces nitrite to nitric oxide (NO) under anoxic conditions (e.g. during flooding or in waterlogged soil) and upon root nodulation (PubMed:15668209, PubMed:27443280, PubMed:30597068). Required for general plant development and during nodulation, especially for the onset of symbiosis (PubMed:27443280, PubMed:30597068, PubMed:34387337). Monitors nitric oxide (NO) levels during early phase of the nitrogen-fixing symbiosis and buffers oxygen in functioning nodules (By similarity). May not function as an oxygen storage or transport protein (By similarity). Has an unusually high affinity for O(2) through a hexacoordinate heme iron because of a very low dissociation constant (By similarity).</text>
</comment>
<comment type="catalytic activity">
    <reaction evidence="2">
        <text>Fe(III)-heme b-[protein] + nitric oxide + H2O = Fe(II)-heme b-[protein] + nitrite + 2 H(+)</text>
        <dbReference type="Rhea" id="RHEA:77711"/>
        <dbReference type="Rhea" id="RHEA-COMP:18975"/>
        <dbReference type="Rhea" id="RHEA-COMP:18976"/>
        <dbReference type="ChEBI" id="CHEBI:15377"/>
        <dbReference type="ChEBI" id="CHEBI:15378"/>
        <dbReference type="ChEBI" id="CHEBI:16301"/>
        <dbReference type="ChEBI" id="CHEBI:16480"/>
        <dbReference type="ChEBI" id="CHEBI:55376"/>
        <dbReference type="ChEBI" id="CHEBI:60344"/>
    </reaction>
    <physiologicalReaction direction="right-to-left" evidence="2">
        <dbReference type="Rhea" id="RHEA:77713"/>
    </physiologicalReaction>
</comment>
<comment type="cofactor">
    <cofactor evidence="3">
        <name>heme b</name>
        <dbReference type="ChEBI" id="CHEBI:60344"/>
    </cofactor>
    <text evidence="3">Binds 1 heme group per subunit.</text>
</comment>
<comment type="subunit">
    <text evidence="2">Homodimer.</text>
</comment>
<comment type="tissue specificity">
    <text evidence="6 7 8">Mainly expressed in root nodules, and, to a lower extent, in leaves, roots, stems, flowers and fruits (PubMed:12461135, PubMed:15668209, PubMed:21073469). Accumulates in mature root nodules (PubMed:12461135, PubMed:15668209).</text>
</comment>
<comment type="developmental stage">
    <text evidence="8">In nodules, localized in the vascular bundles, cortex and infected tissue.</text>
</comment>
<comment type="induction">
    <text evidence="6 7 8 9 10">Induced by nitric oxide (NO), after treatment with the NO-releasing compounds S-nitroso-N-acetyl-DL-penicillamine (SNAP) and sodium nitroprusside (SNP); this induction is repressed by the NO scavenger 2-(4-carboxyphenyl)-4,4,5,5-tetramethylimidazoline-1-oxyl-3-oxide(cPTIO) (PubMed:15668209, PubMed:21073469, PubMed:30597068). Triggered by ethylene, auxin, cytokinins (CK, an equimolar mixture of kinetin and 6-benzyl-aminopurine), polyamines (PA) and jasmonic acid (JA) in roots, and by abscisic acid (ABA) and ethylene in nodules (PubMed:21073469, PubMed:30597068). Induced by hypoxia and cold stress in seedlings roots (PubMed:15668209, PubMed:21073469). Induced transiently rapidely upon inoculation with the symbiotic rhizobium Mesorhizobium loti MAFF303099, followed by a reduced expression (PubMed:15668209, PubMed:27443280). Accumulates during root nodulation, but repressed in roots colonized by the mycorrhizal fungus Glomus sp. R10 (PubMed:12461135). Triggered by cytokinin (BA benzylaminopurine) and slightly by abscisic acid (ABA) (PubMed:15668209).</text>
</comment>
<comment type="disruption phenotype">
    <text evidence="9 11">Smaller plants (shoots and roots), reduced number of leaves and nodules, but increased number of small pods containing less seeds (PubMed:34387337). Reduced shoots and roots length and impaired nodulation (PubMed:27443280).</text>
</comment>
<comment type="similarity">
    <text evidence="17">Belongs to the plant globin family.</text>
</comment>
<dbReference type="EC" id="1.7.2.-" evidence="2"/>
<dbReference type="EMBL" id="AB238220">
    <property type="protein sequence ID" value="BAE46739.1"/>
    <property type="molecule type" value="mRNA"/>
</dbReference>
<dbReference type="EMBL" id="BT148786">
    <property type="protein sequence ID" value="AFK48580.1"/>
    <property type="molecule type" value="mRNA"/>
</dbReference>
<dbReference type="SMR" id="Q3C1F4"/>
<dbReference type="OMA" id="MRQGYQD"/>
<dbReference type="GO" id="GO:0020037">
    <property type="term" value="F:heme binding"/>
    <property type="evidence" value="ECO:0007669"/>
    <property type="project" value="InterPro"/>
</dbReference>
<dbReference type="GO" id="GO:0046872">
    <property type="term" value="F:metal ion binding"/>
    <property type="evidence" value="ECO:0007669"/>
    <property type="project" value="UniProtKB-KW"/>
</dbReference>
<dbReference type="GO" id="GO:0016491">
    <property type="term" value="F:oxidoreductase activity"/>
    <property type="evidence" value="ECO:0007669"/>
    <property type="project" value="UniProtKB-KW"/>
</dbReference>
<dbReference type="GO" id="GO:0019825">
    <property type="term" value="F:oxygen binding"/>
    <property type="evidence" value="ECO:0007669"/>
    <property type="project" value="InterPro"/>
</dbReference>
<dbReference type="GO" id="GO:0005344">
    <property type="term" value="F:oxygen carrier activity"/>
    <property type="evidence" value="ECO:0007669"/>
    <property type="project" value="UniProtKB-KW"/>
</dbReference>
<dbReference type="GO" id="GO:0036377">
    <property type="term" value="P:arbuscular mycorrhizal association"/>
    <property type="evidence" value="ECO:0000270"/>
    <property type="project" value="UniProtKB"/>
</dbReference>
<dbReference type="GO" id="GO:0006809">
    <property type="term" value="P:nitric oxide biosynthetic process"/>
    <property type="evidence" value="ECO:0000314"/>
    <property type="project" value="UniProtKB"/>
</dbReference>
<dbReference type="GO" id="GO:0009877">
    <property type="term" value="P:nodulation"/>
    <property type="evidence" value="ECO:0000314"/>
    <property type="project" value="UniProtKB"/>
</dbReference>
<dbReference type="GO" id="GO:0009737">
    <property type="term" value="P:response to abscisic acid"/>
    <property type="evidence" value="ECO:0000270"/>
    <property type="project" value="UniProtKB"/>
</dbReference>
<dbReference type="GO" id="GO:0009409">
    <property type="term" value="P:response to cold"/>
    <property type="evidence" value="ECO:0000270"/>
    <property type="project" value="UniProtKB"/>
</dbReference>
<dbReference type="GO" id="GO:0009735">
    <property type="term" value="P:response to cytokinin"/>
    <property type="evidence" value="ECO:0000270"/>
    <property type="project" value="UniProtKB"/>
</dbReference>
<dbReference type="GO" id="GO:0009723">
    <property type="term" value="P:response to ethylene"/>
    <property type="evidence" value="ECO:0000270"/>
    <property type="project" value="UniProtKB"/>
</dbReference>
<dbReference type="GO" id="GO:0001666">
    <property type="term" value="P:response to hypoxia"/>
    <property type="evidence" value="ECO:0000270"/>
    <property type="project" value="UniProtKB"/>
</dbReference>
<dbReference type="GO" id="GO:0071731">
    <property type="term" value="P:response to nitric oxide"/>
    <property type="evidence" value="ECO:0000270"/>
    <property type="project" value="UniProtKB"/>
</dbReference>
<dbReference type="GO" id="GO:0009744">
    <property type="term" value="P:response to sucrose"/>
    <property type="evidence" value="ECO:0000270"/>
    <property type="project" value="UniProtKB"/>
</dbReference>
<dbReference type="GO" id="GO:0009609">
    <property type="term" value="P:response to symbiotic bacterium"/>
    <property type="evidence" value="ECO:0000270"/>
    <property type="project" value="UniProtKB"/>
</dbReference>
<dbReference type="GO" id="GO:0009610">
    <property type="term" value="P:response to symbiotic fungus"/>
    <property type="evidence" value="ECO:0000270"/>
    <property type="project" value="UniProtKB"/>
</dbReference>
<dbReference type="CDD" id="cd14784">
    <property type="entry name" value="class1_nsHb-like"/>
    <property type="match status" value="1"/>
</dbReference>
<dbReference type="Gene3D" id="1.10.490.10">
    <property type="entry name" value="Globins"/>
    <property type="match status" value="1"/>
</dbReference>
<dbReference type="InterPro" id="IPR000971">
    <property type="entry name" value="Globin"/>
</dbReference>
<dbReference type="InterPro" id="IPR009050">
    <property type="entry name" value="Globin-like_sf"/>
</dbReference>
<dbReference type="InterPro" id="IPR012292">
    <property type="entry name" value="Globin/Proto"/>
</dbReference>
<dbReference type="InterPro" id="IPR001032">
    <property type="entry name" value="Leghaemoglobin-like"/>
</dbReference>
<dbReference type="InterPro" id="IPR019824">
    <property type="entry name" value="Leghaemoglobin_Fe_BS"/>
</dbReference>
<dbReference type="PANTHER" id="PTHR22924">
    <property type="entry name" value="LEGHEMOGLOBIN-RELATED"/>
    <property type="match status" value="1"/>
</dbReference>
<dbReference type="PANTHER" id="PTHR22924:SF39">
    <property type="entry name" value="NON-SYMBIOTIC HEMOGLOBIN 1"/>
    <property type="match status" value="1"/>
</dbReference>
<dbReference type="Pfam" id="PF00042">
    <property type="entry name" value="Globin"/>
    <property type="match status" value="1"/>
</dbReference>
<dbReference type="PRINTS" id="PR00188">
    <property type="entry name" value="PLANTGLOBIN"/>
</dbReference>
<dbReference type="SUPFAM" id="SSF46458">
    <property type="entry name" value="Globin-like"/>
    <property type="match status" value="1"/>
</dbReference>
<dbReference type="PROSITE" id="PS01033">
    <property type="entry name" value="GLOBIN"/>
    <property type="match status" value="1"/>
</dbReference>
<dbReference type="PROSITE" id="PS00208">
    <property type="entry name" value="PLANT_GLOBIN"/>
    <property type="match status" value="1"/>
</dbReference>
<name>GLB11_LOTJA</name>
<proteinExistence type="evidence at protein level"/>
<evidence type="ECO:0000250" key="1">
    <source>
        <dbReference type="UniProtKB" id="I3SPW2"/>
    </source>
</evidence>
<evidence type="ECO:0000250" key="2">
    <source>
        <dbReference type="UniProtKB" id="O04986"/>
    </source>
</evidence>
<evidence type="ECO:0000250" key="3">
    <source>
        <dbReference type="UniProtKB" id="P68168"/>
    </source>
</evidence>
<evidence type="ECO:0000250" key="4">
    <source>
        <dbReference type="UniProtKB" id="Q42831"/>
    </source>
</evidence>
<evidence type="ECO:0000255" key="5">
    <source>
        <dbReference type="PROSITE-ProRule" id="PRU00238"/>
    </source>
</evidence>
<evidence type="ECO:0000269" key="6">
    <source>
    </source>
</evidence>
<evidence type="ECO:0000269" key="7">
    <source>
    </source>
</evidence>
<evidence type="ECO:0000269" key="8">
    <source>
    </source>
</evidence>
<evidence type="ECO:0000269" key="9">
    <source>
    </source>
</evidence>
<evidence type="ECO:0000269" key="10">
    <source>
    </source>
</evidence>
<evidence type="ECO:0000269" key="11">
    <source>
    </source>
</evidence>
<evidence type="ECO:0000303" key="12">
    <source>
    </source>
</evidence>
<evidence type="ECO:0000303" key="13">
    <source>
    </source>
</evidence>
<evidence type="ECO:0000303" key="14">
    <source>
    </source>
</evidence>
<evidence type="ECO:0000303" key="15">
    <source>
    </source>
</evidence>
<evidence type="ECO:0000303" key="16">
    <source>
    </source>
</evidence>
<evidence type="ECO:0000305" key="17"/>
<evidence type="ECO:0000305" key="18">
    <source>
    </source>
</evidence>
<feature type="chain" id="PRO_0000460310" description="Anaerobic nitrite reductase Glb1-1">
    <location>
        <begin position="1"/>
        <end position="161"/>
    </location>
</feature>
<feature type="domain" description="Globin" evidence="5">
    <location>
        <begin position="8"/>
        <end position="157"/>
    </location>
</feature>
<feature type="short sequence motif" description="Homodimerization" evidence="2">
    <location>
        <begin position="41"/>
        <end position="45"/>
    </location>
</feature>
<feature type="short sequence motif" description="Homodimerization" evidence="2">
    <location>
        <begin position="111"/>
        <end position="123"/>
    </location>
</feature>
<feature type="binding site" evidence="3">
    <location>
        <position position="51"/>
    </location>
    <ligand>
        <name>heme b</name>
        <dbReference type="ChEBI" id="CHEBI:60344"/>
    </ligand>
</feature>
<feature type="binding site" evidence="2">
    <location>
        <position position="65"/>
    </location>
    <ligand>
        <name>heme b</name>
        <dbReference type="ChEBI" id="CHEBI:60344"/>
    </ligand>
</feature>
<feature type="binding site" description="distal binding residue" evidence="5">
    <location>
        <position position="69"/>
    </location>
    <ligand>
        <name>heme b</name>
        <dbReference type="ChEBI" id="CHEBI:60344"/>
    </ligand>
    <ligandPart>
        <name>Fe</name>
        <dbReference type="ChEBI" id="CHEBI:18248"/>
    </ligandPart>
</feature>
<feature type="binding site" evidence="2">
    <location>
        <position position="99"/>
    </location>
    <ligand>
        <name>heme b</name>
        <dbReference type="ChEBI" id="CHEBI:60344"/>
    </ligand>
</feature>
<feature type="binding site" evidence="2">
    <location>
        <position position="103"/>
    </location>
    <ligand>
        <name>heme b</name>
        <dbReference type="ChEBI" id="CHEBI:60344"/>
    </ligand>
</feature>
<feature type="binding site" description="proximal binding residue" evidence="5">
    <location>
        <position position="104"/>
    </location>
    <ligand>
        <name>heme b</name>
        <dbReference type="ChEBI" id="CHEBI:60344"/>
    </ligand>
    <ligandPart>
        <name>Fe</name>
        <dbReference type="ChEBI" id="CHEBI:18248"/>
    </ligandPart>
</feature>
<feature type="site" description="Homodimerization" evidence="2">
    <location>
        <position position="138"/>
    </location>
</feature>
<feature type="mutagenesis site" description="Reduced shoots and roots length." evidence="9">
    <original>P</original>
    <variation>S</variation>
    <location>
        <position position="59"/>
    </location>
</feature>
<feature type="mutagenesis site" description="Reduced shoots and roots length. Decrease in long infection threads and nodules during rhizobia-legume symbiosis, but increased incipient infection threads. Enhanced transient accumulation of nitric oxide (NO). However, normal NO dioxygenase activity." evidence="9">
    <original>A</original>
    <variation>V</variation>
    <location>
        <position position="102"/>
    </location>
</feature>
<feature type="mutagenesis site" description="Reduced shoots and roots length. Decrease in long infection threads and nodules during rhizobia-legume symbiosis, but increased incipient infection threads. Enhanced transient accumulation of nitric oxide (NO). However, normal NO dioxygenase activity." evidence="9">
    <original>E</original>
    <variation>K</variation>
    <location>
        <position position="127"/>
    </location>
</feature>
<feature type="mutagenesis site" description="Reduced shoots and roots length." evidence="9">
    <original>E</original>
    <variation>K</variation>
    <location>
        <position position="136"/>
    </location>
</feature>
<keyword id="KW-0349">Heme</keyword>
<keyword id="KW-0408">Iron</keyword>
<keyword id="KW-0479">Metal-binding</keyword>
<keyword id="KW-0560">Oxidoreductase</keyword>
<keyword id="KW-0561">Oxygen transport</keyword>
<keyword id="KW-0813">Transport</keyword>
<gene>
    <name evidence="14 15 16" type="primary">GLB1-1</name>
    <name evidence="12 13" type="synonym">HB1</name>
    <name evidence="18" type="ordered locus">LotjaGi3g1v0504500</name>
    <name evidence="15" type="ordered locus">Lj3g3v3338170</name>
</gene>
<sequence length="161" mass="18036">MSTLGSTCFTEEQEALVVKSWSVMKKNSAELGLKLFLKIFEIAPSAQKLFSFLRDSKVPLEENPKLKPHAMSVFVMTCESAAQLRKAGKVTVRESTLKKLGATHYKYGVVNEHFEVTKFALLDTIKEAVPEMWSPEMKNAWTQAYDQLVGAIKSEMKPSSS</sequence>
<protein>
    <recommendedName>
        <fullName evidence="2">Anaerobic nitrite reductase Glb1-1</fullName>
        <ecNumber evidence="2">1.7.2.-</ecNumber>
    </recommendedName>
    <alternativeName>
        <fullName evidence="12">Nonsymbiotic hemoglobin 1</fullName>
        <shortName evidence="12 13">LjHb1</shortName>
        <shortName evidence="12">LjNSG1</shortName>
    </alternativeName>
    <alternativeName>
        <fullName evidence="14 15 16">Nonsymbiotic hemoglobin 1-1</fullName>
        <shortName evidence="14 15 16">LjGlb1-1</shortName>
    </alternativeName>
    <alternativeName>
        <fullName evidence="17">Phytoglobin 1.1</fullName>
        <shortName evidence="17">Phytogb1.1</shortName>
    </alternativeName>
</protein>
<accession>Q3C1F4</accession>
<reference key="1">
    <citation type="journal article" date="2002" name="Plant Cell Physiol.">
        <title>Expression of symbiotic and nonsymbiotic globin genes responding to microsymbionts on Lotus japonicus.</title>
        <authorList>
            <person name="Uchiumi T."/>
            <person name="Shimoda Y."/>
            <person name="Tsuruta T."/>
            <person name="Mukoyoshi Y."/>
            <person name="Suzuki A."/>
            <person name="Senoo K."/>
            <person name="Sato S."/>
            <person name="Kato T."/>
            <person name="Tabata S."/>
            <person name="Higashi S."/>
            <person name="Abe M."/>
        </authorList>
    </citation>
    <scope>NUCLEOTIDE SEQUENCE [MRNA]</scope>
    <scope>TISSUE SPECIFICITY</scope>
    <scope>INDUCTION BY NODULATION</scope>
    <scope>REPRESSION BY GLOMUS FUNGUS</scope>
    <source>
        <strain>cv. Miyakojima MG-20</strain>
        <tissue>Seedling</tissue>
    </source>
</reference>
<reference key="2">
    <citation type="submission" date="2012-05" db="EMBL/GenBank/DDBJ databases">
        <authorList>
            <person name="Krishnakumar V."/>
            <person name="Cheung F."/>
            <person name="Xiao Y."/>
            <person name="Chan A."/>
            <person name="Moskal W.A."/>
            <person name="Town C.D."/>
        </authorList>
    </citation>
    <scope>NUCLEOTIDE SEQUENCE [MRNA]</scope>
</reference>
<reference key="3">
    <citation type="journal article" date="2005" name="Plant Cell Physiol.">
        <title>Symbiotic rhizobium and nitric oxide induce gene expression of non-symbiotic hemoglobin in Lotus japonicus.</title>
        <authorList>
            <person name="Shimoda Y."/>
            <person name="Nagata M."/>
            <person name="Suzuki A."/>
            <person name="Abe M."/>
            <person name="Sato S."/>
            <person name="Kato T."/>
            <person name="Tabata S."/>
            <person name="Higashi S."/>
            <person name="Uchiumi T."/>
        </authorList>
    </citation>
    <scope>FUNCTION</scope>
    <scope>INDUCTION BY MESORHIZOBIUM LOTI; NITRIC OXIDE; CYTOKININ; HYPOXIA; ABSCISIC ACID AND COLD STRESS</scope>
    <scope>TISSUE SPECIFICITY</scope>
    <source>
        <strain>cv. Miyakojima MG-20</strain>
    </source>
</reference>
<reference key="4">
    <citation type="journal article" date="2011" name="New Phytol.">
        <title>Regulation of nonsymbiotic and truncated hemoglobin genes of Lotus japonicus in plant organs and in response to nitric oxide and hormones.</title>
        <authorList>
            <person name="Bustos-Sanmamed P."/>
            <person name="Tovar-Mendez A."/>
            <person name="Crespi M."/>
            <person name="Sato S."/>
            <person name="Tabata S."/>
            <person name="Becana M."/>
        </authorList>
    </citation>
    <scope>TISSUE SPECIFICITY</scope>
    <scope>DEVELOPMENTAL STAGE</scope>
    <scope>INDUCTION BY ETHYLENE; AUXIN; SUCROSE; HYPOXIA; COLD STRESS; NITRIC OXIDE; CYTOKININS; POLYAMINES; JASMONIC ACID AND ABSCISIC ACID</scope>
    <source>
        <strain>cv. MG20</strain>
    </source>
</reference>
<reference key="5">
    <citation type="journal article" date="2016" name="J. Exp. Bot.">
        <title>Hemoglobin LjGlb1-1 is involved in nodulation and regulates the level of nitric oxide in the Lotus japonicus-Mesorhizobium loti symbiosis.</title>
        <authorList>
            <person name="Fukudome M."/>
            <person name="Calvo-Begueria L."/>
            <person name="Kado T."/>
            <person name="Osuki K."/>
            <person name="Rubio M.C."/>
            <person name="Murakami E."/>
            <person name="Nagata M."/>
            <person name="Kucho K."/>
            <person name="Sandal N."/>
            <person name="Stougaard J."/>
            <person name="Becana M."/>
            <person name="Uchiumi T."/>
        </authorList>
    </citation>
    <scope>FUNCTION</scope>
    <scope>DISRUPTION PHENOTYPE</scope>
    <scope>MUTAGENESIS OF PRO-59; ALA-102; GLU-127 AND GLU-136</scope>
    <scope>INDUCTION BY MESORHIZOBIUM LOTI</scope>
    <source>
        <strain>cv. Gifu B-129</strain>
    </source>
</reference>
<reference key="6">
    <citation type="journal article" date="2019" name="Plant Cell Physiol.">
        <title>Stably transformed Lotus japonicus plants overexpressing phytoglobin LjGlb1-1 show decreased nitric oxide levels in roots and nodules as well as delayed nodule senescence.</title>
        <authorList>
            <person name="Fukudome M."/>
            <person name="Watanabe E."/>
            <person name="Osuki K.I."/>
            <person name="Imaizumi R."/>
            <person name="Aoki T."/>
            <person name="Becana M."/>
            <person name="Uchiumi T."/>
        </authorList>
    </citation>
    <scope>FUNCTION</scope>
    <scope>INDUCTION BY NITRIC OXIDE; ABSCISIC ACID AND ETHYLENE</scope>
</reference>
<reference key="7">
    <citation type="journal article" date="2021" name="J. Exp. Bot.">
        <title>Three classes of hemoglobins are required for optimal vegetative and reproductive growth of Lotus japonicus: genetic and biochemical characterization of LjGlb2-1.</title>
        <authorList>
            <person name="Villar I."/>
            <person name="Rubio M.C."/>
            <person name="Calvo-Begueria L."/>
            <person name="Perez-Rontome C."/>
            <person name="Larrainzar E."/>
            <person name="Wilson M.T."/>
            <person name="Sandal N."/>
            <person name="Mur L.A."/>
            <person name="Wang L."/>
            <person name="Reeder B."/>
            <person name="Duanmu D."/>
            <person name="Uchiumi T."/>
            <person name="Stougaard J."/>
            <person name="Becana M."/>
        </authorList>
    </citation>
    <scope>FUNCTION</scope>
    <scope>DISRUPTION PHENOTYPE</scope>
    <source>
        <strain>cv. Gifu B-129</strain>
    </source>
</reference>